<accession>Q94WX4</accession>
<evidence type="ECO:0000250" key="1"/>
<evidence type="ECO:0000250" key="2">
    <source>
        <dbReference type="UniProtKB" id="P00157"/>
    </source>
</evidence>
<evidence type="ECO:0000255" key="3">
    <source>
        <dbReference type="PROSITE-ProRule" id="PRU00967"/>
    </source>
</evidence>
<evidence type="ECO:0000255" key="4">
    <source>
        <dbReference type="PROSITE-ProRule" id="PRU00968"/>
    </source>
</evidence>
<reference key="1">
    <citation type="journal article" date="2001" name="Mol. Biol. Evol.">
        <title>Recurrent amplifications and deletions of satellite DNA accompanied chromosomal diversification in South American tuco-tucos (genus Ctenomys, Rodentia: Octodontidae): a phylogenetic approach.</title>
        <authorList>
            <person name="Slamovits C.H."/>
            <person name="Cook J.A."/>
            <person name="Lessa E.P."/>
            <person name="Rossi M.S."/>
        </authorList>
    </citation>
    <scope>NUCLEOTIDE SEQUENCE [GENOMIC DNA]</scope>
</reference>
<proteinExistence type="inferred from homology"/>
<gene>
    <name type="primary">MT-CYB</name>
    <name type="synonym">COB</name>
    <name type="synonym">CYTB</name>
    <name type="synonym">MTCYB</name>
</gene>
<dbReference type="EMBL" id="AF370697">
    <property type="protein sequence ID" value="AAL01861.1"/>
    <property type="molecule type" value="Genomic_DNA"/>
</dbReference>
<dbReference type="SMR" id="Q94WX4"/>
<dbReference type="GO" id="GO:0005743">
    <property type="term" value="C:mitochondrial inner membrane"/>
    <property type="evidence" value="ECO:0007669"/>
    <property type="project" value="UniProtKB-SubCell"/>
</dbReference>
<dbReference type="GO" id="GO:0045275">
    <property type="term" value="C:respiratory chain complex III"/>
    <property type="evidence" value="ECO:0007669"/>
    <property type="project" value="InterPro"/>
</dbReference>
<dbReference type="GO" id="GO:0046872">
    <property type="term" value="F:metal ion binding"/>
    <property type="evidence" value="ECO:0007669"/>
    <property type="project" value="UniProtKB-KW"/>
</dbReference>
<dbReference type="GO" id="GO:0008121">
    <property type="term" value="F:ubiquinol-cytochrome-c reductase activity"/>
    <property type="evidence" value="ECO:0007669"/>
    <property type="project" value="InterPro"/>
</dbReference>
<dbReference type="GO" id="GO:0006122">
    <property type="term" value="P:mitochondrial electron transport, ubiquinol to cytochrome c"/>
    <property type="evidence" value="ECO:0007669"/>
    <property type="project" value="TreeGrafter"/>
</dbReference>
<dbReference type="CDD" id="cd00290">
    <property type="entry name" value="cytochrome_b_C"/>
    <property type="match status" value="1"/>
</dbReference>
<dbReference type="CDD" id="cd00284">
    <property type="entry name" value="Cytochrome_b_N"/>
    <property type="match status" value="1"/>
</dbReference>
<dbReference type="FunFam" id="1.20.810.10:FF:000002">
    <property type="entry name" value="Cytochrome b"/>
    <property type="match status" value="1"/>
</dbReference>
<dbReference type="Gene3D" id="1.20.810.10">
    <property type="entry name" value="Cytochrome Bc1 Complex, Chain C"/>
    <property type="match status" value="1"/>
</dbReference>
<dbReference type="InterPro" id="IPR005798">
    <property type="entry name" value="Cyt_b/b6_C"/>
</dbReference>
<dbReference type="InterPro" id="IPR036150">
    <property type="entry name" value="Cyt_b/b6_C_sf"/>
</dbReference>
<dbReference type="InterPro" id="IPR005797">
    <property type="entry name" value="Cyt_b/b6_N"/>
</dbReference>
<dbReference type="InterPro" id="IPR027387">
    <property type="entry name" value="Cytb/b6-like_sf"/>
</dbReference>
<dbReference type="InterPro" id="IPR030689">
    <property type="entry name" value="Cytochrome_b"/>
</dbReference>
<dbReference type="InterPro" id="IPR048260">
    <property type="entry name" value="Cytochrome_b_C_euk/bac"/>
</dbReference>
<dbReference type="InterPro" id="IPR048259">
    <property type="entry name" value="Cytochrome_b_N_euk/bac"/>
</dbReference>
<dbReference type="InterPro" id="IPR016174">
    <property type="entry name" value="Di-haem_cyt_TM"/>
</dbReference>
<dbReference type="PANTHER" id="PTHR19271">
    <property type="entry name" value="CYTOCHROME B"/>
    <property type="match status" value="1"/>
</dbReference>
<dbReference type="PANTHER" id="PTHR19271:SF16">
    <property type="entry name" value="CYTOCHROME B"/>
    <property type="match status" value="1"/>
</dbReference>
<dbReference type="Pfam" id="PF00032">
    <property type="entry name" value="Cytochrom_B_C"/>
    <property type="match status" value="1"/>
</dbReference>
<dbReference type="Pfam" id="PF00033">
    <property type="entry name" value="Cytochrome_B"/>
    <property type="match status" value="1"/>
</dbReference>
<dbReference type="PIRSF" id="PIRSF038885">
    <property type="entry name" value="COB"/>
    <property type="match status" value="1"/>
</dbReference>
<dbReference type="SUPFAM" id="SSF81648">
    <property type="entry name" value="a domain/subunit of cytochrome bc1 complex (Ubiquinol-cytochrome c reductase)"/>
    <property type="match status" value="1"/>
</dbReference>
<dbReference type="SUPFAM" id="SSF81342">
    <property type="entry name" value="Transmembrane di-heme cytochromes"/>
    <property type="match status" value="1"/>
</dbReference>
<dbReference type="PROSITE" id="PS51003">
    <property type="entry name" value="CYTB_CTER"/>
    <property type="match status" value="1"/>
</dbReference>
<dbReference type="PROSITE" id="PS51002">
    <property type="entry name" value="CYTB_NTER"/>
    <property type="match status" value="1"/>
</dbReference>
<protein>
    <recommendedName>
        <fullName>Cytochrome b</fullName>
    </recommendedName>
    <alternativeName>
        <fullName>Complex III subunit 3</fullName>
    </alternativeName>
    <alternativeName>
        <fullName>Complex III subunit III</fullName>
    </alternativeName>
    <alternativeName>
        <fullName>Cytochrome b-c1 complex subunit 3</fullName>
    </alternativeName>
    <alternativeName>
        <fullName>Ubiquinol-cytochrome-c reductase complex cytochrome b subunit</fullName>
    </alternativeName>
</protein>
<name>CYB_CTEAU</name>
<geneLocation type="mitochondrion"/>
<organism>
    <name type="scientific">Ctenomys australis</name>
    <name type="common">Southern tuco-tuco</name>
    <dbReference type="NCBI Taxonomy" id="170736"/>
    <lineage>
        <taxon>Eukaryota</taxon>
        <taxon>Metazoa</taxon>
        <taxon>Chordata</taxon>
        <taxon>Craniata</taxon>
        <taxon>Vertebrata</taxon>
        <taxon>Euteleostomi</taxon>
        <taxon>Mammalia</taxon>
        <taxon>Eutheria</taxon>
        <taxon>Euarchontoglires</taxon>
        <taxon>Glires</taxon>
        <taxon>Rodentia</taxon>
        <taxon>Hystricomorpha</taxon>
        <taxon>Ctenomyidae</taxon>
        <taxon>Ctenomys</taxon>
    </lineage>
</organism>
<keyword id="KW-0249">Electron transport</keyword>
<keyword id="KW-0349">Heme</keyword>
<keyword id="KW-0408">Iron</keyword>
<keyword id="KW-0472">Membrane</keyword>
<keyword id="KW-0479">Metal-binding</keyword>
<keyword id="KW-0496">Mitochondrion</keyword>
<keyword id="KW-0999">Mitochondrion inner membrane</keyword>
<keyword id="KW-0679">Respiratory chain</keyword>
<keyword id="KW-0812">Transmembrane</keyword>
<keyword id="KW-1133">Transmembrane helix</keyword>
<keyword id="KW-0813">Transport</keyword>
<keyword id="KW-0830">Ubiquinone</keyword>
<comment type="function">
    <text evidence="2">Component of the ubiquinol-cytochrome c reductase complex (complex III or cytochrome b-c1 complex) that is part of the mitochondrial respiratory chain. The b-c1 complex mediates electron transfer from ubiquinol to cytochrome c. Contributes to the generation of a proton gradient across the mitochondrial membrane that is then used for ATP synthesis.</text>
</comment>
<comment type="cofactor">
    <cofactor evidence="2">
        <name>heme b</name>
        <dbReference type="ChEBI" id="CHEBI:60344"/>
    </cofactor>
    <text evidence="2">Binds 2 heme b groups non-covalently.</text>
</comment>
<comment type="subunit">
    <text evidence="2">The cytochrome bc1 complex contains 11 subunits: 3 respiratory subunits (MT-CYB, CYC1 and UQCRFS1), 2 core proteins (UQCRC1 and UQCRC2) and 6 low-molecular weight proteins (UQCRH/QCR6, UQCRB/QCR7, UQCRQ/QCR8, UQCR10/QCR9, UQCR11/QCR10 and a cleavage product of UQCRFS1). This cytochrome bc1 complex then forms a dimer.</text>
</comment>
<comment type="subcellular location">
    <subcellularLocation>
        <location evidence="2">Mitochondrion inner membrane</location>
        <topology evidence="2">Multi-pass membrane protein</topology>
    </subcellularLocation>
</comment>
<comment type="miscellaneous">
    <text evidence="1">Heme 1 (or BL or b562) is low-potential and absorbs at about 562 nm, and heme 2 (or BH or b566) is high-potential and absorbs at about 566 nm.</text>
</comment>
<comment type="similarity">
    <text evidence="3 4">Belongs to the cytochrome b family.</text>
</comment>
<comment type="caution">
    <text evidence="2">The full-length protein contains only eight transmembrane helices, not nine as predicted by bioinformatics tools.</text>
</comment>
<sequence length="379" mass="42940">MTNTRKSHPLIKIVNHSFIDLPAPSNISAWWNFGSLLGVCLGLQILTGLFLAMHYTADTTTAFSSVTHICRDVNYGWLIRYMHANGASMFFIFLYFHIGRGIYYGSYTFMNTWNIGVLLLFAVMATAFMGYVLPWGQMSFWGATVITNLLSAIPYIGPTLVEWIWGGFSVDKATLTRFFAFHFILPFIITAMVMIHLLFLHETGSNNPSGMNSDSDKIPFHPYYTIKDILGILFMMITLMSLVMFTPDLLGDPDNYTPANPLNTPPHIKPEWYFLFAYAILRSIPNKLGGVLALVLSILILMLFPILHSSKQRSMSFRPLSQCLMWMLVANLLILTWIGGQPVEHPFITIGQLASVTYFFIILILMPSTALMENKLLKW</sequence>
<feature type="chain" id="PRO_0000255016" description="Cytochrome b">
    <location>
        <begin position="1"/>
        <end position="379"/>
    </location>
</feature>
<feature type="transmembrane region" description="Helical" evidence="2">
    <location>
        <begin position="33"/>
        <end position="53"/>
    </location>
</feature>
<feature type="transmembrane region" description="Helical" evidence="2">
    <location>
        <begin position="77"/>
        <end position="98"/>
    </location>
</feature>
<feature type="transmembrane region" description="Helical" evidence="2">
    <location>
        <begin position="113"/>
        <end position="133"/>
    </location>
</feature>
<feature type="transmembrane region" description="Helical" evidence="2">
    <location>
        <begin position="178"/>
        <end position="198"/>
    </location>
</feature>
<feature type="transmembrane region" description="Helical" evidence="2">
    <location>
        <begin position="226"/>
        <end position="246"/>
    </location>
</feature>
<feature type="transmembrane region" description="Helical" evidence="2">
    <location>
        <begin position="288"/>
        <end position="308"/>
    </location>
</feature>
<feature type="transmembrane region" description="Helical" evidence="2">
    <location>
        <begin position="320"/>
        <end position="340"/>
    </location>
</feature>
<feature type="transmembrane region" description="Helical" evidence="2">
    <location>
        <begin position="347"/>
        <end position="367"/>
    </location>
</feature>
<feature type="binding site" description="axial binding residue" evidence="2">
    <location>
        <position position="83"/>
    </location>
    <ligand>
        <name>heme b</name>
        <dbReference type="ChEBI" id="CHEBI:60344"/>
        <label>b562</label>
    </ligand>
    <ligandPart>
        <name>Fe</name>
        <dbReference type="ChEBI" id="CHEBI:18248"/>
    </ligandPart>
</feature>
<feature type="binding site" description="axial binding residue" evidence="2">
    <location>
        <position position="97"/>
    </location>
    <ligand>
        <name>heme b</name>
        <dbReference type="ChEBI" id="CHEBI:60344"/>
        <label>b566</label>
    </ligand>
    <ligandPart>
        <name>Fe</name>
        <dbReference type="ChEBI" id="CHEBI:18248"/>
    </ligandPart>
</feature>
<feature type="binding site" description="axial binding residue" evidence="2">
    <location>
        <position position="182"/>
    </location>
    <ligand>
        <name>heme b</name>
        <dbReference type="ChEBI" id="CHEBI:60344"/>
        <label>b562</label>
    </ligand>
    <ligandPart>
        <name>Fe</name>
        <dbReference type="ChEBI" id="CHEBI:18248"/>
    </ligandPart>
</feature>
<feature type="binding site" description="axial binding residue" evidence="2">
    <location>
        <position position="196"/>
    </location>
    <ligand>
        <name>heme b</name>
        <dbReference type="ChEBI" id="CHEBI:60344"/>
        <label>b566</label>
    </ligand>
    <ligandPart>
        <name>Fe</name>
        <dbReference type="ChEBI" id="CHEBI:18248"/>
    </ligandPart>
</feature>
<feature type="binding site" evidence="2">
    <location>
        <position position="201"/>
    </location>
    <ligand>
        <name>a ubiquinone</name>
        <dbReference type="ChEBI" id="CHEBI:16389"/>
    </ligand>
</feature>